<sequence length="595" mass="68088">MAPWSGLWGGKLAAGESPVLRSRFYAFIRAFVVLSVLLLIVELGAYINGWDDLAASALALPVIGVESLYASWLRFRATYVAPFIQFLTDACVVLFLIQSADRLIQCLGCFYIHLKRIKPNPKSPALPDAEDPDAAYYPMVLVQIPMCNEKEVYQQSIAAVCNLDWPRSNFLVQVLDDSDDPTTQTLIREEVLKWQQNGARIVYRHRVLRDGYKAGNLKSAMSCSYVKDYEFVAIFDADFQPNPDFLKRTVPHFKDNDELGLVQARWSFVNKDENLLTRLQNINLCFHFEVEQQVNGIFLNFFGFNGTAGVWRIKALDDSGGWMERTTVEDMDIAVRAHLRGWKFIFLNDVECQCELPESYEAYRKQQHRWHSGPMQLFRLCLPDIIKCKIVFWKKANLIFLFFLLRKLILPFYSFTLFCIILPMTMFVPEAELPDWVVCYIPALMSLLNILPSPKSFPFIIPYLLFENTMSVTKFNAMISGLFQLGNAYEWVVTKKSGRSSEGDLISLAPKELKHQKTESAPNLDAIAKEQSAPRKDVKKKHNRIYKKELALSLLLLTAAARSLLSKQGIHFYFLLFQGISFLLVGLDLIGEQIE</sequence>
<accession>Q6AU53</accession>
<accession>Q10EE1</accession>
<accession>Q8W1N8</accession>
<accession>Q8W5S2</accession>
<reference key="1">
    <citation type="journal article" date="2002" name="Plant Physiol.">
        <title>Cellulose synthase-like genes of rice.</title>
        <authorList>
            <person name="Hazen S.P."/>
            <person name="Scott-Craig J.S."/>
            <person name="Walton J.D."/>
        </authorList>
    </citation>
    <scope>NUCLEOTIDE SEQUENCE [GENOMIC DNA / MRNA] (ISOFORM 1)</scope>
</reference>
<reference key="2">
    <citation type="journal article" date="2005" name="Genome Res.">
        <title>Sequence, annotation, and analysis of synteny between rice chromosome 3 and diverged grass species.</title>
        <authorList>
            <consortium name="The rice chromosome 3 sequencing consortium"/>
            <person name="Buell C.R."/>
            <person name="Yuan Q."/>
            <person name="Ouyang S."/>
            <person name="Liu J."/>
            <person name="Zhu W."/>
            <person name="Wang A."/>
            <person name="Maiti R."/>
            <person name="Haas B."/>
            <person name="Wortman J."/>
            <person name="Pertea M."/>
            <person name="Jones K.M."/>
            <person name="Kim M."/>
            <person name="Overton L."/>
            <person name="Tsitrin T."/>
            <person name="Fadrosh D."/>
            <person name="Bera J."/>
            <person name="Weaver B."/>
            <person name="Jin S."/>
            <person name="Johri S."/>
            <person name="Reardon M."/>
            <person name="Webb K."/>
            <person name="Hill J."/>
            <person name="Moffat K."/>
            <person name="Tallon L."/>
            <person name="Van Aken S."/>
            <person name="Lewis M."/>
            <person name="Utterback T."/>
            <person name="Feldblyum T."/>
            <person name="Zismann V."/>
            <person name="Iobst S."/>
            <person name="Hsiao J."/>
            <person name="de Vazeille A.R."/>
            <person name="Salzberg S.L."/>
            <person name="White O."/>
            <person name="Fraser C.M."/>
            <person name="Yu Y."/>
            <person name="Kim H."/>
            <person name="Rambo T."/>
            <person name="Currie J."/>
            <person name="Collura K."/>
            <person name="Kernodle-Thompson S."/>
            <person name="Wei F."/>
            <person name="Kudrna K."/>
            <person name="Ammiraju J.S.S."/>
            <person name="Luo M."/>
            <person name="Goicoechea J.L."/>
            <person name="Wing R.A."/>
            <person name="Henry D."/>
            <person name="Oates R."/>
            <person name="Palmer M."/>
            <person name="Pries G."/>
            <person name="Saski C."/>
            <person name="Simmons J."/>
            <person name="Soderlund C."/>
            <person name="Nelson W."/>
            <person name="de la Bastide M."/>
            <person name="Spiegel L."/>
            <person name="Nascimento L."/>
            <person name="Huang E."/>
            <person name="Preston R."/>
            <person name="Zutavern T."/>
            <person name="Palmer L."/>
            <person name="O'Shaughnessy A."/>
            <person name="Dike S."/>
            <person name="McCombie W.R."/>
            <person name="Minx P."/>
            <person name="Cordum H."/>
            <person name="Wilson R."/>
            <person name="Jin W."/>
            <person name="Lee H.R."/>
            <person name="Jiang J."/>
            <person name="Jackson S."/>
        </authorList>
    </citation>
    <scope>NUCLEOTIDE SEQUENCE [LARGE SCALE GENOMIC DNA]</scope>
    <source>
        <strain>cv. Nipponbare</strain>
    </source>
</reference>
<reference key="3">
    <citation type="journal article" date="2005" name="Nature">
        <title>The map-based sequence of the rice genome.</title>
        <authorList>
            <consortium name="International rice genome sequencing project (IRGSP)"/>
        </authorList>
    </citation>
    <scope>NUCLEOTIDE SEQUENCE [LARGE SCALE GENOMIC DNA]</scope>
    <source>
        <strain>cv. Nipponbare</strain>
    </source>
</reference>
<reference key="4">
    <citation type="journal article" date="2008" name="Nucleic Acids Res.">
        <title>The rice annotation project database (RAP-DB): 2008 update.</title>
        <authorList>
            <consortium name="The rice annotation project (RAP)"/>
        </authorList>
    </citation>
    <scope>GENOME REANNOTATION</scope>
    <source>
        <strain>cv. Nipponbare</strain>
    </source>
</reference>
<reference key="5">
    <citation type="journal article" date="2013" name="Rice">
        <title>Improvement of the Oryza sativa Nipponbare reference genome using next generation sequence and optical map data.</title>
        <authorList>
            <person name="Kawahara Y."/>
            <person name="de la Bastide M."/>
            <person name="Hamilton J.P."/>
            <person name="Kanamori H."/>
            <person name="McCombie W.R."/>
            <person name="Ouyang S."/>
            <person name="Schwartz D.C."/>
            <person name="Tanaka T."/>
            <person name="Wu J."/>
            <person name="Zhou S."/>
            <person name="Childs K.L."/>
            <person name="Davidson R.M."/>
            <person name="Lin H."/>
            <person name="Quesada-Ocampo L."/>
            <person name="Vaillancourt B."/>
            <person name="Sakai H."/>
            <person name="Lee S.S."/>
            <person name="Kim J."/>
            <person name="Numa H."/>
            <person name="Itoh T."/>
            <person name="Buell C.R."/>
            <person name="Matsumoto T."/>
        </authorList>
    </citation>
    <scope>GENOME REANNOTATION</scope>
    <source>
        <strain>cv. Nipponbare</strain>
    </source>
</reference>
<reference key="6">
    <citation type="journal article" date="2003" name="Science">
        <title>Collection, mapping, and annotation of over 28,000 cDNA clones from japonica rice.</title>
        <authorList>
            <consortium name="The rice full-length cDNA consortium"/>
        </authorList>
    </citation>
    <scope>NUCLEOTIDE SEQUENCE [LARGE SCALE MRNA] (ISOFORM 2)</scope>
    <source>
        <strain>cv. Nipponbare</strain>
    </source>
</reference>
<name>CSLC9_ORYSJ</name>
<dbReference type="EC" id="2.4.1.-"/>
<dbReference type="EMBL" id="AF435641">
    <property type="protein sequence ID" value="AAL38526.1"/>
    <property type="molecule type" value="mRNA"/>
</dbReference>
<dbReference type="EMBL" id="AF435653">
    <property type="protein sequence ID" value="AAL32452.1"/>
    <property type="molecule type" value="Genomic_DNA"/>
</dbReference>
<dbReference type="EMBL" id="AF435652">
    <property type="protein sequence ID" value="AAL32452.1"/>
    <property type="status" value="JOINED"/>
    <property type="molecule type" value="Genomic_DNA"/>
</dbReference>
<dbReference type="EMBL" id="AC133450">
    <property type="protein sequence ID" value="AAT85054.1"/>
    <property type="molecule type" value="Genomic_DNA"/>
</dbReference>
<dbReference type="EMBL" id="DP000009">
    <property type="protein sequence ID" value="ABF99087.1"/>
    <property type="status" value="ALT_SEQ"/>
    <property type="molecule type" value="Genomic_DNA"/>
</dbReference>
<dbReference type="EMBL" id="AP008209">
    <property type="protein sequence ID" value="BAF13318.1"/>
    <property type="molecule type" value="Genomic_DNA"/>
</dbReference>
<dbReference type="EMBL" id="AP014959">
    <property type="protein sequence ID" value="BAS86591.1"/>
    <property type="molecule type" value="Genomic_DNA"/>
</dbReference>
<dbReference type="EMBL" id="AK121805">
    <property type="status" value="NOT_ANNOTATED_CDS"/>
    <property type="molecule type" value="mRNA"/>
</dbReference>
<dbReference type="SMR" id="Q6AU53"/>
<dbReference type="FunCoup" id="Q6AU53">
    <property type="interactions" value="16"/>
</dbReference>
<dbReference type="STRING" id="39947.Q6AU53"/>
<dbReference type="CAZy" id="GT2">
    <property type="family name" value="Glycosyltransferase Family 2"/>
</dbReference>
<dbReference type="PaxDb" id="39947-Q6AU53"/>
<dbReference type="KEGG" id="dosa:Os03g0770800"/>
<dbReference type="eggNOG" id="ENOG502QTBF">
    <property type="taxonomic scope" value="Eukaryota"/>
</dbReference>
<dbReference type="HOGENOM" id="CLU_012856_1_0_1"/>
<dbReference type="InParanoid" id="Q6AU53"/>
<dbReference type="OMA" id="APSFGWW"/>
<dbReference type="Proteomes" id="UP000000763">
    <property type="component" value="Chromosome 3"/>
</dbReference>
<dbReference type="Proteomes" id="UP000059680">
    <property type="component" value="Chromosome 3"/>
</dbReference>
<dbReference type="GO" id="GO:0005794">
    <property type="term" value="C:Golgi apparatus"/>
    <property type="evidence" value="ECO:0000318"/>
    <property type="project" value="GO_Central"/>
</dbReference>
<dbReference type="GO" id="GO:0000139">
    <property type="term" value="C:Golgi membrane"/>
    <property type="evidence" value="ECO:0007669"/>
    <property type="project" value="UniProtKB-SubCell"/>
</dbReference>
<dbReference type="GO" id="GO:0016757">
    <property type="term" value="F:glycosyltransferase activity"/>
    <property type="evidence" value="ECO:0000318"/>
    <property type="project" value="GO_Central"/>
</dbReference>
<dbReference type="GO" id="GO:0071555">
    <property type="term" value="P:cell wall organization"/>
    <property type="evidence" value="ECO:0007669"/>
    <property type="project" value="UniProtKB-KW"/>
</dbReference>
<dbReference type="FunFam" id="3.90.550.10:FF:000007">
    <property type="entry name" value="probable xyloglucan glycosyltransferase 5"/>
    <property type="match status" value="1"/>
</dbReference>
<dbReference type="Gene3D" id="3.90.550.10">
    <property type="entry name" value="Spore Coat Polysaccharide Biosynthesis Protein SpsA, Chain A"/>
    <property type="match status" value="1"/>
</dbReference>
<dbReference type="InterPro" id="IPR001173">
    <property type="entry name" value="Glyco_trans_2-like"/>
</dbReference>
<dbReference type="InterPro" id="IPR029044">
    <property type="entry name" value="Nucleotide-diphossugar_trans"/>
</dbReference>
<dbReference type="PANTHER" id="PTHR32044">
    <property type="entry name" value="GLUCOMANNAN 4-BETA-MANNOSYLTRANSFERASE 9"/>
    <property type="match status" value="1"/>
</dbReference>
<dbReference type="PANTHER" id="PTHR32044:SF51">
    <property type="entry name" value="XYLOGLUCAN GLYCOSYLTRANSFERASE 9-RELATED"/>
    <property type="match status" value="1"/>
</dbReference>
<dbReference type="Pfam" id="PF13632">
    <property type="entry name" value="Glyco_trans_2_3"/>
    <property type="match status" value="1"/>
</dbReference>
<dbReference type="SUPFAM" id="SSF53448">
    <property type="entry name" value="Nucleotide-diphospho-sugar transferases"/>
    <property type="match status" value="1"/>
</dbReference>
<feature type="chain" id="PRO_0000319387" description="Probable xyloglucan glycosyltransferase 9">
    <location>
        <begin position="1"/>
        <end position="595"/>
    </location>
</feature>
<feature type="transmembrane region" description="Helical" evidence="2">
    <location>
        <begin position="30"/>
        <end position="50"/>
    </location>
</feature>
<feature type="transmembrane region" description="Helical" evidence="2">
    <location>
        <begin position="77"/>
        <end position="97"/>
    </location>
</feature>
<feature type="transmembrane region" description="Helical" evidence="2">
    <location>
        <begin position="408"/>
        <end position="428"/>
    </location>
</feature>
<feature type="transmembrane region" description="Helical" evidence="2">
    <location>
        <begin position="433"/>
        <end position="453"/>
    </location>
</feature>
<feature type="transmembrane region" description="Helical" evidence="2">
    <location>
        <begin position="545"/>
        <end position="564"/>
    </location>
</feature>
<feature type="transmembrane region" description="Helical" evidence="2">
    <location>
        <begin position="570"/>
        <end position="590"/>
    </location>
</feature>
<feature type="active site" evidence="2">
    <location>
        <position position="177"/>
    </location>
</feature>
<feature type="active site" evidence="2">
    <location>
        <position position="330"/>
    </location>
</feature>
<feature type="binding site" evidence="2">
    <location>
        <position position="236"/>
    </location>
    <ligand>
        <name>substrate</name>
    </ligand>
</feature>
<feature type="binding site" evidence="2">
    <location>
        <position position="238"/>
    </location>
    <ligand>
        <name>substrate</name>
    </ligand>
</feature>
<feature type="splice variant" id="VSP_031473" description="In isoform 2." evidence="3">
    <original>A</original>
    <variation>AA</variation>
    <location>
        <position position="14"/>
    </location>
</feature>
<feature type="sequence conflict" description="In Ref. 1; AAL38526." evidence="4" ref="1">
    <original>DA</original>
    <variation>HP</variation>
    <location>
        <begin position="128"/>
        <end position="129"/>
    </location>
</feature>
<evidence type="ECO:0000250" key="1"/>
<evidence type="ECO:0000255" key="2"/>
<evidence type="ECO:0000303" key="3">
    <source>
    </source>
</evidence>
<evidence type="ECO:0000305" key="4"/>
<gene>
    <name type="primary">CSLC9</name>
    <name type="ordered locus">Os03g0770800</name>
    <name type="ordered locus">LOC_Os03g56060</name>
    <name type="ORF">OSJNBa0072F13.8</name>
</gene>
<comment type="function">
    <text evidence="1">Probable beta-1,4-glucan synthase rather involved in the synthesis of the xyloglucan backbone than cellulose. Seems to work simultaneously with xyloglucan 6-xylosyltransferase. Xyloglucan is a noncellulosic polysaccharides of plant cell wall and consists of a glucan backbone substituted by xylose, galactose and fucose (By similarity).</text>
</comment>
<comment type="subcellular location">
    <subcellularLocation>
        <location evidence="4">Golgi apparatus membrane</location>
        <topology evidence="4">Multi-pass membrane protein</topology>
    </subcellularLocation>
</comment>
<comment type="alternative products">
    <event type="alternative splicing"/>
    <isoform>
        <id>Q6AU53-1</id>
        <name>1</name>
        <sequence type="displayed"/>
    </isoform>
    <isoform>
        <id>Q6AU53-2</id>
        <name>2</name>
        <sequence type="described" ref="VSP_031473"/>
    </isoform>
</comment>
<comment type="similarity">
    <text evidence="4">Belongs to the glycosyltransferase 2 family. Plant cellulose synthase-like C subfamily.</text>
</comment>
<comment type="sequence caution" evidence="4">
    <conflict type="erroneous gene model prediction">
        <sequence resource="EMBL-CDS" id="ABF99087"/>
    </conflict>
</comment>
<protein>
    <recommendedName>
        <fullName>Probable xyloglucan glycosyltransferase 9</fullName>
        <ecNumber>2.4.1.-</ecNumber>
    </recommendedName>
    <alternativeName>
        <fullName>Cellulose synthase-like protein C9</fullName>
    </alternativeName>
    <alternativeName>
        <fullName>OsCslC9</fullName>
    </alternativeName>
</protein>
<keyword id="KW-0025">Alternative splicing</keyword>
<keyword id="KW-0961">Cell wall biogenesis/degradation</keyword>
<keyword id="KW-0328">Glycosyltransferase</keyword>
<keyword id="KW-0333">Golgi apparatus</keyword>
<keyword id="KW-0472">Membrane</keyword>
<keyword id="KW-1185">Reference proteome</keyword>
<keyword id="KW-0808">Transferase</keyword>
<keyword id="KW-0812">Transmembrane</keyword>
<keyword id="KW-1133">Transmembrane helix</keyword>
<organism>
    <name type="scientific">Oryza sativa subsp. japonica</name>
    <name type="common">Rice</name>
    <dbReference type="NCBI Taxonomy" id="39947"/>
    <lineage>
        <taxon>Eukaryota</taxon>
        <taxon>Viridiplantae</taxon>
        <taxon>Streptophyta</taxon>
        <taxon>Embryophyta</taxon>
        <taxon>Tracheophyta</taxon>
        <taxon>Spermatophyta</taxon>
        <taxon>Magnoliopsida</taxon>
        <taxon>Liliopsida</taxon>
        <taxon>Poales</taxon>
        <taxon>Poaceae</taxon>
        <taxon>BOP clade</taxon>
        <taxon>Oryzoideae</taxon>
        <taxon>Oryzeae</taxon>
        <taxon>Oryzinae</taxon>
        <taxon>Oryza</taxon>
        <taxon>Oryza sativa</taxon>
    </lineage>
</organism>
<proteinExistence type="evidence at transcript level"/>